<keyword id="KW-0067">ATP-binding</keyword>
<keyword id="KW-0119">Carbohydrate metabolism</keyword>
<keyword id="KW-0963">Cytoplasm</keyword>
<keyword id="KW-0299">Galactose metabolism</keyword>
<keyword id="KW-0418">Kinase</keyword>
<keyword id="KW-0460">Magnesium</keyword>
<keyword id="KW-0479">Metal-binding</keyword>
<keyword id="KW-0547">Nucleotide-binding</keyword>
<keyword id="KW-0808">Transferase</keyword>
<gene>
    <name evidence="1" type="primary">galK</name>
    <name type="ordered locus">llmg_2235</name>
</gene>
<reference key="1">
    <citation type="submission" date="1998-09" db="EMBL/GenBank/DDBJ databases">
        <title>Characterization, expression and mutations of the Lactococcus lactis galAMKTE genes involved in galactose utilization via the Leloir pathway.</title>
        <authorList>
            <person name="Grossiord B.P."/>
            <person name="Luesink E.J."/>
            <person name="Vaughan E.E."/>
            <person name="Kuipers O.P."/>
            <person name="De Vos W.M."/>
        </authorList>
    </citation>
    <scope>NUCLEOTIDE SEQUENCE [GENOMIC DNA]</scope>
</reference>
<reference key="2">
    <citation type="journal article" date="2007" name="J. Bacteriol.">
        <title>The complete genome sequence of the lactic acid bacterial paradigm Lactococcus lactis subsp. cremoris MG1363.</title>
        <authorList>
            <person name="Wegmann U."/>
            <person name="O'Connell-Motherway M."/>
            <person name="Zomer A."/>
            <person name="Buist G."/>
            <person name="Shearman C."/>
            <person name="Canchaya C."/>
            <person name="Ventura M."/>
            <person name="Goesmann A."/>
            <person name="Gasson M.J."/>
            <person name="Kuipers O.P."/>
            <person name="van Sinderen D."/>
            <person name="Kok J."/>
        </authorList>
    </citation>
    <scope>NUCLEOTIDE SEQUENCE [LARGE SCALE GENOMIC DNA]</scope>
    <source>
        <strain>MG1363</strain>
    </source>
</reference>
<organism>
    <name type="scientific">Lactococcus lactis subsp. cremoris (strain MG1363)</name>
    <dbReference type="NCBI Taxonomy" id="416870"/>
    <lineage>
        <taxon>Bacteria</taxon>
        <taxon>Bacillati</taxon>
        <taxon>Bacillota</taxon>
        <taxon>Bacilli</taxon>
        <taxon>Lactobacillales</taxon>
        <taxon>Streptococcaceae</taxon>
        <taxon>Lactococcus</taxon>
        <taxon>Lactococcus cremoris subsp. cremoris</taxon>
    </lineage>
</organism>
<comment type="function">
    <text evidence="1">Catalyzes the transfer of the gamma-phosphate of ATP to D-galactose to form alpha-D-galactose-1-phosphate (Gal-1-P).</text>
</comment>
<comment type="catalytic activity">
    <reaction evidence="1">
        <text>alpha-D-galactose + ATP = alpha-D-galactose 1-phosphate + ADP + H(+)</text>
        <dbReference type="Rhea" id="RHEA:13553"/>
        <dbReference type="ChEBI" id="CHEBI:15378"/>
        <dbReference type="ChEBI" id="CHEBI:28061"/>
        <dbReference type="ChEBI" id="CHEBI:30616"/>
        <dbReference type="ChEBI" id="CHEBI:58336"/>
        <dbReference type="ChEBI" id="CHEBI:456216"/>
        <dbReference type="EC" id="2.7.1.6"/>
    </reaction>
</comment>
<comment type="pathway">
    <text evidence="1">Carbohydrate metabolism; galactose metabolism.</text>
</comment>
<comment type="subcellular location">
    <subcellularLocation>
        <location evidence="1">Cytoplasm</location>
    </subcellularLocation>
</comment>
<comment type="similarity">
    <text evidence="1">Belongs to the GHMP kinase family. GalK subfamily.</text>
</comment>
<feature type="chain" id="PRO_0000184616" description="Galactokinase">
    <location>
        <begin position="1"/>
        <end position="399"/>
    </location>
</feature>
<feature type="active site" description="Proton acceptor" evidence="1">
    <location>
        <position position="183"/>
    </location>
</feature>
<feature type="binding site" evidence="1">
    <location>
        <begin position="42"/>
        <end position="45"/>
    </location>
    <ligand>
        <name>substrate</name>
    </ligand>
</feature>
<feature type="binding site" evidence="1">
    <location>
        <position position="76"/>
    </location>
    <ligand>
        <name>ATP</name>
        <dbReference type="ChEBI" id="CHEBI:30616"/>
    </ligand>
</feature>
<feature type="binding site" evidence="1">
    <location>
        <begin position="133"/>
        <end position="139"/>
    </location>
    <ligand>
        <name>ATP</name>
        <dbReference type="ChEBI" id="CHEBI:30616"/>
    </ligand>
</feature>
<feature type="binding site" evidence="1">
    <location>
        <position position="139"/>
    </location>
    <ligand>
        <name>Mg(2+)</name>
        <dbReference type="ChEBI" id="CHEBI:18420"/>
    </ligand>
</feature>
<feature type="binding site" evidence="1">
    <location>
        <position position="171"/>
    </location>
    <ligand>
        <name>Mg(2+)</name>
        <dbReference type="ChEBI" id="CHEBI:18420"/>
    </ligand>
</feature>
<feature type="binding site" evidence="1">
    <location>
        <position position="233"/>
    </location>
    <ligand>
        <name>substrate</name>
    </ligand>
</feature>
<feature type="site" description="Transition state stabilizer" evidence="1">
    <location>
        <position position="36"/>
    </location>
</feature>
<dbReference type="EC" id="2.7.1.6" evidence="1"/>
<dbReference type="EMBL" id="AJ011653">
    <property type="protein sequence ID" value="CAB44216.1"/>
    <property type="molecule type" value="Genomic_DNA"/>
</dbReference>
<dbReference type="EMBL" id="AM406671">
    <property type="protein sequence ID" value="CAL98802.1"/>
    <property type="molecule type" value="Genomic_DNA"/>
</dbReference>
<dbReference type="RefSeq" id="WP_011835926.1">
    <property type="nucleotide sequence ID" value="NC_009004.1"/>
</dbReference>
<dbReference type="SMR" id="Q9S6S2"/>
<dbReference type="STRING" id="416870.llmg_2235"/>
<dbReference type="KEGG" id="llm:llmg_2235"/>
<dbReference type="eggNOG" id="COG0153">
    <property type="taxonomic scope" value="Bacteria"/>
</dbReference>
<dbReference type="HOGENOM" id="CLU_017814_2_1_9"/>
<dbReference type="OrthoDB" id="250531at2"/>
<dbReference type="PhylomeDB" id="Q9S6S2"/>
<dbReference type="UniPathway" id="UPA00214"/>
<dbReference type="Proteomes" id="UP000000364">
    <property type="component" value="Chromosome"/>
</dbReference>
<dbReference type="GO" id="GO:0005829">
    <property type="term" value="C:cytosol"/>
    <property type="evidence" value="ECO:0007669"/>
    <property type="project" value="TreeGrafter"/>
</dbReference>
<dbReference type="GO" id="GO:0005524">
    <property type="term" value="F:ATP binding"/>
    <property type="evidence" value="ECO:0007669"/>
    <property type="project" value="UniProtKB-UniRule"/>
</dbReference>
<dbReference type="GO" id="GO:0004335">
    <property type="term" value="F:galactokinase activity"/>
    <property type="evidence" value="ECO:0007669"/>
    <property type="project" value="UniProtKB-UniRule"/>
</dbReference>
<dbReference type="GO" id="GO:0000287">
    <property type="term" value="F:magnesium ion binding"/>
    <property type="evidence" value="ECO:0007669"/>
    <property type="project" value="UniProtKB-UniRule"/>
</dbReference>
<dbReference type="GO" id="GO:0006012">
    <property type="term" value="P:galactose metabolic process"/>
    <property type="evidence" value="ECO:0007669"/>
    <property type="project" value="UniProtKB-UniRule"/>
</dbReference>
<dbReference type="FunFam" id="3.30.230.10:FF:000017">
    <property type="entry name" value="Galactokinase"/>
    <property type="match status" value="1"/>
</dbReference>
<dbReference type="FunFam" id="3.30.70.890:FF:000001">
    <property type="entry name" value="Galactokinase"/>
    <property type="match status" value="1"/>
</dbReference>
<dbReference type="Gene3D" id="3.30.230.10">
    <property type="match status" value="1"/>
</dbReference>
<dbReference type="Gene3D" id="3.30.70.890">
    <property type="entry name" value="GHMP kinase, C-terminal domain"/>
    <property type="match status" value="1"/>
</dbReference>
<dbReference type="HAMAP" id="MF_00246">
    <property type="entry name" value="Galactokinase"/>
    <property type="match status" value="1"/>
</dbReference>
<dbReference type="InterPro" id="IPR000705">
    <property type="entry name" value="Galactokinase"/>
</dbReference>
<dbReference type="InterPro" id="IPR022963">
    <property type="entry name" value="Galactokinase_bac"/>
</dbReference>
<dbReference type="InterPro" id="IPR019741">
    <property type="entry name" value="Galactokinase_CS"/>
</dbReference>
<dbReference type="InterPro" id="IPR019539">
    <property type="entry name" value="GalKase_N"/>
</dbReference>
<dbReference type="InterPro" id="IPR013750">
    <property type="entry name" value="GHMP_kinase_C_dom"/>
</dbReference>
<dbReference type="InterPro" id="IPR036554">
    <property type="entry name" value="GHMP_kinase_C_sf"/>
</dbReference>
<dbReference type="InterPro" id="IPR006204">
    <property type="entry name" value="GHMP_kinase_N_dom"/>
</dbReference>
<dbReference type="InterPro" id="IPR006203">
    <property type="entry name" value="GHMP_knse_ATP-bd_CS"/>
</dbReference>
<dbReference type="InterPro" id="IPR006206">
    <property type="entry name" value="Mevalonate/galactokinase"/>
</dbReference>
<dbReference type="InterPro" id="IPR020568">
    <property type="entry name" value="Ribosomal_Su5_D2-typ_SF"/>
</dbReference>
<dbReference type="InterPro" id="IPR014721">
    <property type="entry name" value="Ribsml_uS5_D2-typ_fold_subgr"/>
</dbReference>
<dbReference type="NCBIfam" id="TIGR00131">
    <property type="entry name" value="gal_kin"/>
    <property type="match status" value="1"/>
</dbReference>
<dbReference type="NCBIfam" id="NF003705">
    <property type="entry name" value="PRK05322.1"/>
    <property type="match status" value="1"/>
</dbReference>
<dbReference type="PANTHER" id="PTHR10457:SF7">
    <property type="entry name" value="GALACTOKINASE-RELATED"/>
    <property type="match status" value="1"/>
</dbReference>
<dbReference type="PANTHER" id="PTHR10457">
    <property type="entry name" value="MEVALONATE KINASE/GALACTOKINASE"/>
    <property type="match status" value="1"/>
</dbReference>
<dbReference type="Pfam" id="PF10509">
    <property type="entry name" value="GalKase_gal_bdg"/>
    <property type="match status" value="1"/>
</dbReference>
<dbReference type="Pfam" id="PF08544">
    <property type="entry name" value="GHMP_kinases_C"/>
    <property type="match status" value="1"/>
</dbReference>
<dbReference type="Pfam" id="PF00288">
    <property type="entry name" value="GHMP_kinases_N"/>
    <property type="match status" value="1"/>
</dbReference>
<dbReference type="PIRSF" id="PIRSF000530">
    <property type="entry name" value="Galactokinase"/>
    <property type="match status" value="1"/>
</dbReference>
<dbReference type="PRINTS" id="PR00473">
    <property type="entry name" value="GALCTOKINASE"/>
</dbReference>
<dbReference type="PRINTS" id="PR00959">
    <property type="entry name" value="MEVGALKINASE"/>
</dbReference>
<dbReference type="SUPFAM" id="SSF55060">
    <property type="entry name" value="GHMP Kinase, C-terminal domain"/>
    <property type="match status" value="1"/>
</dbReference>
<dbReference type="SUPFAM" id="SSF54211">
    <property type="entry name" value="Ribosomal protein S5 domain 2-like"/>
    <property type="match status" value="1"/>
</dbReference>
<dbReference type="PROSITE" id="PS00106">
    <property type="entry name" value="GALACTOKINASE"/>
    <property type="match status" value="1"/>
</dbReference>
<dbReference type="PROSITE" id="PS00627">
    <property type="entry name" value="GHMP_KINASES_ATP"/>
    <property type="match status" value="1"/>
</dbReference>
<accession>Q9S6S2</accession>
<accession>A2RNB4</accession>
<proteinExistence type="inferred from homology"/>
<sequence>MSIVVENSTVLSALTEKFAEVFGDTKKVEYFFSPGRINLIGEHTDYNGGYVFPASITIGTTGLARLREDNKVKLYSENFPKLGVIEFDLDDVENKDGELWSNYVKGMIVMLKGAGYEIDKGFELLIKGEIPTASGLSSSASLELLVGVVLDDLFKLSVPRLELVQLGQKTENDYIGVNSGILDQFAIGFGEVKKAILLDCNTLKYEMVPVELRDYDIVIMNTNKPRALTESKYNERFAETREALKRMQTKLDIQSLGELSNEEFDANTDLIGDETLIKRARHAVYENNRTKIAQKAFVAGNLTKFGELLNASHASLKDDYEVTGLELDTLAETAQKQAGVLGARMTGAGFGGCAIALVAHDNVSAFEKAVGEVYEEVVGYPASFYVAQIGSGSTKLDVE</sequence>
<name>GAL1_LACLM</name>
<protein>
    <recommendedName>
        <fullName evidence="1">Galactokinase</fullName>
        <ecNumber evidence="1">2.7.1.6</ecNumber>
    </recommendedName>
    <alternativeName>
        <fullName evidence="1">Galactose kinase</fullName>
    </alternativeName>
</protein>
<evidence type="ECO:0000255" key="1">
    <source>
        <dbReference type="HAMAP-Rule" id="MF_00246"/>
    </source>
</evidence>